<protein>
    <recommendedName>
        <fullName evidence="1">Ribosomal RNA small subunit methyltransferase G</fullName>
        <ecNumber evidence="1">2.1.1.-</ecNumber>
    </recommendedName>
    <alternativeName>
        <fullName evidence="1">16S rRNA 7-methylguanosine methyltransferase</fullName>
        <shortName evidence="1">16S rRNA m7G methyltransferase</shortName>
    </alternativeName>
</protein>
<dbReference type="EC" id="2.1.1.-" evidence="1"/>
<dbReference type="EMBL" id="Z33013">
    <property type="protein sequence ID" value="CAA83698.1"/>
    <property type="molecule type" value="Genomic_DNA"/>
</dbReference>
<dbReference type="EMBL" id="CP000123">
    <property type="protein sequence ID" value="ABC01561.1"/>
    <property type="molecule type" value="Genomic_DNA"/>
</dbReference>
<dbReference type="PIR" id="S77879">
    <property type="entry name" value="S77879"/>
</dbReference>
<dbReference type="RefSeq" id="WP_011387639.1">
    <property type="nucleotide sequence ID" value="NC_007633.1"/>
</dbReference>
<dbReference type="SMR" id="Q48960"/>
<dbReference type="GeneID" id="23778241"/>
<dbReference type="KEGG" id="mcp:MCAP_0807"/>
<dbReference type="HOGENOM" id="CLU_065341_0_1_14"/>
<dbReference type="PhylomeDB" id="Q48960"/>
<dbReference type="Proteomes" id="UP000001928">
    <property type="component" value="Chromosome"/>
</dbReference>
<dbReference type="GO" id="GO:0005829">
    <property type="term" value="C:cytosol"/>
    <property type="evidence" value="ECO:0007669"/>
    <property type="project" value="TreeGrafter"/>
</dbReference>
<dbReference type="GO" id="GO:0070043">
    <property type="term" value="F:rRNA (guanine-N7-)-methyltransferase activity"/>
    <property type="evidence" value="ECO:0007669"/>
    <property type="project" value="UniProtKB-UniRule"/>
</dbReference>
<dbReference type="CDD" id="cd02440">
    <property type="entry name" value="AdoMet_MTases"/>
    <property type="match status" value="1"/>
</dbReference>
<dbReference type="FunFam" id="3.40.50.150:FF:000041">
    <property type="entry name" value="Ribosomal RNA small subunit methyltransferase G"/>
    <property type="match status" value="1"/>
</dbReference>
<dbReference type="Gene3D" id="3.40.50.150">
    <property type="entry name" value="Vaccinia Virus protein VP39"/>
    <property type="match status" value="1"/>
</dbReference>
<dbReference type="HAMAP" id="MF_00074">
    <property type="entry name" value="16SrRNA_methyltr_G"/>
    <property type="match status" value="1"/>
</dbReference>
<dbReference type="InterPro" id="IPR003682">
    <property type="entry name" value="rRNA_ssu_MeTfrase_G"/>
</dbReference>
<dbReference type="InterPro" id="IPR029063">
    <property type="entry name" value="SAM-dependent_MTases_sf"/>
</dbReference>
<dbReference type="NCBIfam" id="TIGR00138">
    <property type="entry name" value="rsmG_gidB"/>
    <property type="match status" value="1"/>
</dbReference>
<dbReference type="PANTHER" id="PTHR31760">
    <property type="entry name" value="S-ADENOSYL-L-METHIONINE-DEPENDENT METHYLTRANSFERASES SUPERFAMILY PROTEIN"/>
    <property type="match status" value="1"/>
</dbReference>
<dbReference type="PANTHER" id="PTHR31760:SF0">
    <property type="entry name" value="S-ADENOSYL-L-METHIONINE-DEPENDENT METHYLTRANSFERASES SUPERFAMILY PROTEIN"/>
    <property type="match status" value="1"/>
</dbReference>
<dbReference type="Pfam" id="PF02527">
    <property type="entry name" value="GidB"/>
    <property type="match status" value="1"/>
</dbReference>
<dbReference type="PIRSF" id="PIRSF003078">
    <property type="entry name" value="GidB"/>
    <property type="match status" value="1"/>
</dbReference>
<dbReference type="SUPFAM" id="SSF53335">
    <property type="entry name" value="S-adenosyl-L-methionine-dependent methyltransferases"/>
    <property type="match status" value="1"/>
</dbReference>
<proteinExistence type="inferred from homology"/>
<sequence>MFSNWNIFLNYKNFTINQEIKNKLNLYYQILIEENQKYNLTRITELNEVFEKHFLDSLLFVEQFQIIDQKIADIGTGAGFPGIVLKIFFPNIKLTLIESNNKKVNFLKYLVQKLNLNDVEILNKRAEELNEYKEQFDIVISRAVAYLNIILELGVQLVKVNGMFILLKGPKAYQEIKDLKNKDQKMNLKLINIQELEDTGFGTRINLFYKKINHTNNLYPRKYQQILKESK</sequence>
<evidence type="ECO:0000255" key="1">
    <source>
        <dbReference type="HAMAP-Rule" id="MF_00074"/>
    </source>
</evidence>
<feature type="chain" id="PRO_0000184284" description="Ribosomal RNA small subunit methyltransferase G">
    <location>
        <begin position="1"/>
        <end position="231"/>
    </location>
</feature>
<feature type="binding site" evidence="1">
    <location>
        <position position="75"/>
    </location>
    <ligand>
        <name>S-adenosyl-L-methionine</name>
        <dbReference type="ChEBI" id="CHEBI:59789"/>
    </ligand>
</feature>
<feature type="binding site" evidence="1">
    <location>
        <position position="80"/>
    </location>
    <ligand>
        <name>S-adenosyl-L-methionine</name>
        <dbReference type="ChEBI" id="CHEBI:59789"/>
    </ligand>
</feature>
<feature type="binding site" evidence="1">
    <location>
        <begin position="126"/>
        <end position="127"/>
    </location>
    <ligand>
        <name>S-adenosyl-L-methionine</name>
        <dbReference type="ChEBI" id="CHEBI:59789"/>
    </ligand>
</feature>
<feature type="binding site" evidence="1">
    <location>
        <position position="142"/>
    </location>
    <ligand>
        <name>S-adenosyl-L-methionine</name>
        <dbReference type="ChEBI" id="CHEBI:59789"/>
    </ligand>
</feature>
<reference key="1">
    <citation type="journal article" date="1995" name="Mol. Microbiol.">
        <title>Exploring the Mycoplasma capricolum genome: a minimal cell reveals its physiology.</title>
        <authorList>
            <person name="Bork P."/>
            <person name="Ouzounis C."/>
            <person name="Casari G."/>
            <person name="Schneider R."/>
            <person name="Sander C."/>
            <person name="Dolan M."/>
            <person name="Gilbert W."/>
            <person name="Gillevet P.M."/>
        </authorList>
    </citation>
    <scope>NUCLEOTIDE SEQUENCE [GENOMIC DNA]</scope>
</reference>
<reference key="2">
    <citation type="submission" date="2005-09" db="EMBL/GenBank/DDBJ databases">
        <authorList>
            <person name="Glass J.I."/>
            <person name="Lartigue C."/>
            <person name="Pfannkoch C."/>
            <person name="Baden-Tillson H."/>
            <person name="Smith H.O."/>
            <person name="Venter J.C."/>
            <person name="Roske K."/>
            <person name="Wise K.S."/>
            <person name="Calcutt M.J."/>
            <person name="Nelson W.C."/>
            <person name="Nierman W.C."/>
        </authorList>
    </citation>
    <scope>NUCLEOTIDE SEQUENCE [LARGE SCALE GENOMIC DNA]</scope>
    <source>
        <strain>California kid / ATCC 27343 / NCTC 10154</strain>
    </source>
</reference>
<accession>Q48960</accession>
<accession>Q2SR58</accession>
<name>RSMG_MYCCT</name>
<gene>
    <name evidence="1" type="primary">rsmG</name>
    <name type="ordered locus">MCAP_0807</name>
</gene>
<comment type="function">
    <text evidence="1">Specifically methylates the N7 position of a guanine in 16S rRNA.</text>
</comment>
<comment type="subcellular location">
    <subcellularLocation>
        <location evidence="1">Cytoplasm</location>
    </subcellularLocation>
</comment>
<comment type="similarity">
    <text evidence="1">Belongs to the methyltransferase superfamily. RNA methyltransferase RsmG family.</text>
</comment>
<keyword id="KW-0963">Cytoplasm</keyword>
<keyword id="KW-0489">Methyltransferase</keyword>
<keyword id="KW-0698">rRNA processing</keyword>
<keyword id="KW-0949">S-adenosyl-L-methionine</keyword>
<keyword id="KW-0808">Transferase</keyword>
<organism>
    <name type="scientific">Mycoplasma capricolum subsp. capricolum (strain California kid / ATCC 27343 / NCTC 10154)</name>
    <dbReference type="NCBI Taxonomy" id="340047"/>
    <lineage>
        <taxon>Bacteria</taxon>
        <taxon>Bacillati</taxon>
        <taxon>Mycoplasmatota</taxon>
        <taxon>Mollicutes</taxon>
        <taxon>Mycoplasmataceae</taxon>
        <taxon>Mycoplasma</taxon>
    </lineage>
</organism>